<protein>
    <recommendedName>
        <fullName evidence="1">Hydroxyethylthiazole kinase</fullName>
        <ecNumber evidence="1">2.7.1.50</ecNumber>
    </recommendedName>
    <alternativeName>
        <fullName evidence="1">4-methyl-5-beta-hydroxyethylthiazole kinase</fullName>
        <shortName evidence="1">TH kinase</shortName>
        <shortName evidence="1">Thz kinase</shortName>
    </alternativeName>
</protein>
<reference key="1">
    <citation type="submission" date="2008-12" db="EMBL/GenBank/DDBJ databases">
        <title>Complete sequence of Chloroflexus aggregans DSM 9485.</title>
        <authorList>
            <consortium name="US DOE Joint Genome Institute"/>
            <person name="Lucas S."/>
            <person name="Copeland A."/>
            <person name="Lapidus A."/>
            <person name="Glavina del Rio T."/>
            <person name="Dalin E."/>
            <person name="Tice H."/>
            <person name="Pitluck S."/>
            <person name="Foster B."/>
            <person name="Larimer F."/>
            <person name="Land M."/>
            <person name="Hauser L."/>
            <person name="Kyrpides N."/>
            <person name="Mikhailova N."/>
            <person name="Bryant D.A."/>
            <person name="Richardson P."/>
        </authorList>
    </citation>
    <scope>NUCLEOTIDE SEQUENCE [LARGE SCALE GENOMIC DNA]</scope>
    <source>
        <strain>MD-66 / DSM 9485</strain>
    </source>
</reference>
<sequence>MTFNDRIAELRDRVRQQRPLIHHITNFVVMNDTANVTLHIGGLPVMAHDREEVAEMVAAAGALVLNVGTLSPDWIEAMIIAGKRANELGIPIVLDPVGAGATSLRTSSNRRLLETLQVAVIRGNSGEIGALAGMGGVVKGVEAVVEADDPLAAAQVLARQYHTVVAVTGRRDLVTDGSRVLAVDNGHEWLKTLTGTGCSATTVIAAFTAVERDYLFAAAAGLACFGLAAELAAPQARGPASFKVAFYDAIYHLAADQIRAGARVVDLSTEQSKAVAQS</sequence>
<proteinExistence type="inferred from homology"/>
<gene>
    <name evidence="1" type="primary">thiM</name>
    <name type="ordered locus">Cagg_3165</name>
</gene>
<comment type="function">
    <text evidence="1">Catalyzes the phosphorylation of the hydroxyl group of 4-methyl-5-beta-hydroxyethylthiazole (THZ).</text>
</comment>
<comment type="catalytic activity">
    <reaction evidence="1">
        <text>5-(2-hydroxyethyl)-4-methylthiazole + ATP = 4-methyl-5-(2-phosphooxyethyl)-thiazole + ADP + H(+)</text>
        <dbReference type="Rhea" id="RHEA:24212"/>
        <dbReference type="ChEBI" id="CHEBI:15378"/>
        <dbReference type="ChEBI" id="CHEBI:17957"/>
        <dbReference type="ChEBI" id="CHEBI:30616"/>
        <dbReference type="ChEBI" id="CHEBI:58296"/>
        <dbReference type="ChEBI" id="CHEBI:456216"/>
        <dbReference type="EC" id="2.7.1.50"/>
    </reaction>
</comment>
<comment type="cofactor">
    <cofactor evidence="1">
        <name>Mg(2+)</name>
        <dbReference type="ChEBI" id="CHEBI:18420"/>
    </cofactor>
</comment>
<comment type="pathway">
    <text evidence="1">Cofactor biosynthesis; thiamine diphosphate biosynthesis; 4-methyl-5-(2-phosphoethyl)-thiazole from 5-(2-hydroxyethyl)-4-methylthiazole: step 1/1.</text>
</comment>
<comment type="similarity">
    <text evidence="1">Belongs to the Thz kinase family.</text>
</comment>
<keyword id="KW-0067">ATP-binding</keyword>
<keyword id="KW-0418">Kinase</keyword>
<keyword id="KW-0460">Magnesium</keyword>
<keyword id="KW-0479">Metal-binding</keyword>
<keyword id="KW-0547">Nucleotide-binding</keyword>
<keyword id="KW-0784">Thiamine biosynthesis</keyword>
<keyword id="KW-0808">Transferase</keyword>
<organism>
    <name type="scientific">Chloroflexus aggregans (strain MD-66 / DSM 9485)</name>
    <dbReference type="NCBI Taxonomy" id="326427"/>
    <lineage>
        <taxon>Bacteria</taxon>
        <taxon>Bacillati</taxon>
        <taxon>Chloroflexota</taxon>
        <taxon>Chloroflexia</taxon>
        <taxon>Chloroflexales</taxon>
        <taxon>Chloroflexineae</taxon>
        <taxon>Chloroflexaceae</taxon>
        <taxon>Chloroflexus</taxon>
    </lineage>
</organism>
<name>THIM_CHLAD</name>
<feature type="chain" id="PRO_0000383833" description="Hydroxyethylthiazole kinase">
    <location>
        <begin position="1"/>
        <end position="278"/>
    </location>
</feature>
<feature type="binding site" evidence="1">
    <location>
        <position position="46"/>
    </location>
    <ligand>
        <name>substrate</name>
    </ligand>
</feature>
<feature type="binding site" evidence="1">
    <location>
        <position position="122"/>
    </location>
    <ligand>
        <name>ATP</name>
        <dbReference type="ChEBI" id="CHEBI:30616"/>
    </ligand>
</feature>
<feature type="binding site" evidence="1">
    <location>
        <position position="168"/>
    </location>
    <ligand>
        <name>ATP</name>
        <dbReference type="ChEBI" id="CHEBI:30616"/>
    </ligand>
</feature>
<feature type="binding site" evidence="1">
    <location>
        <position position="195"/>
    </location>
    <ligand>
        <name>substrate</name>
    </ligand>
</feature>
<accession>B8G7I8</accession>
<evidence type="ECO:0000255" key="1">
    <source>
        <dbReference type="HAMAP-Rule" id="MF_00228"/>
    </source>
</evidence>
<dbReference type="EC" id="2.7.1.50" evidence="1"/>
<dbReference type="EMBL" id="CP001337">
    <property type="protein sequence ID" value="ACL26023.1"/>
    <property type="molecule type" value="Genomic_DNA"/>
</dbReference>
<dbReference type="RefSeq" id="WP_015941871.1">
    <property type="nucleotide sequence ID" value="NC_011831.1"/>
</dbReference>
<dbReference type="SMR" id="B8G7I8"/>
<dbReference type="STRING" id="326427.Cagg_3165"/>
<dbReference type="KEGG" id="cag:Cagg_3165"/>
<dbReference type="eggNOG" id="COG2145">
    <property type="taxonomic scope" value="Bacteria"/>
</dbReference>
<dbReference type="HOGENOM" id="CLU_019943_0_1_0"/>
<dbReference type="OrthoDB" id="9778146at2"/>
<dbReference type="UniPathway" id="UPA00060">
    <property type="reaction ID" value="UER00139"/>
</dbReference>
<dbReference type="Proteomes" id="UP000002508">
    <property type="component" value="Chromosome"/>
</dbReference>
<dbReference type="GO" id="GO:0005524">
    <property type="term" value="F:ATP binding"/>
    <property type="evidence" value="ECO:0007669"/>
    <property type="project" value="UniProtKB-UniRule"/>
</dbReference>
<dbReference type="GO" id="GO:0004417">
    <property type="term" value="F:hydroxyethylthiazole kinase activity"/>
    <property type="evidence" value="ECO:0007669"/>
    <property type="project" value="UniProtKB-UniRule"/>
</dbReference>
<dbReference type="GO" id="GO:0000287">
    <property type="term" value="F:magnesium ion binding"/>
    <property type="evidence" value="ECO:0007669"/>
    <property type="project" value="UniProtKB-UniRule"/>
</dbReference>
<dbReference type="GO" id="GO:0009228">
    <property type="term" value="P:thiamine biosynthetic process"/>
    <property type="evidence" value="ECO:0007669"/>
    <property type="project" value="UniProtKB-KW"/>
</dbReference>
<dbReference type="GO" id="GO:0009229">
    <property type="term" value="P:thiamine diphosphate biosynthetic process"/>
    <property type="evidence" value="ECO:0007669"/>
    <property type="project" value="UniProtKB-UniRule"/>
</dbReference>
<dbReference type="CDD" id="cd01170">
    <property type="entry name" value="THZ_kinase"/>
    <property type="match status" value="1"/>
</dbReference>
<dbReference type="Gene3D" id="3.40.1190.20">
    <property type="match status" value="1"/>
</dbReference>
<dbReference type="HAMAP" id="MF_00228">
    <property type="entry name" value="Thz_kinase"/>
    <property type="match status" value="1"/>
</dbReference>
<dbReference type="InterPro" id="IPR000417">
    <property type="entry name" value="Hyethyz_kinase"/>
</dbReference>
<dbReference type="InterPro" id="IPR029056">
    <property type="entry name" value="Ribokinase-like"/>
</dbReference>
<dbReference type="NCBIfam" id="NF006830">
    <property type="entry name" value="PRK09355.1"/>
    <property type="match status" value="1"/>
</dbReference>
<dbReference type="NCBIfam" id="TIGR00694">
    <property type="entry name" value="thiM"/>
    <property type="match status" value="1"/>
</dbReference>
<dbReference type="Pfam" id="PF02110">
    <property type="entry name" value="HK"/>
    <property type="match status" value="1"/>
</dbReference>
<dbReference type="PIRSF" id="PIRSF000513">
    <property type="entry name" value="Thz_kinase"/>
    <property type="match status" value="1"/>
</dbReference>
<dbReference type="PRINTS" id="PR01099">
    <property type="entry name" value="HYETHTZKNASE"/>
</dbReference>
<dbReference type="SUPFAM" id="SSF53613">
    <property type="entry name" value="Ribokinase-like"/>
    <property type="match status" value="1"/>
</dbReference>